<reference key="1">
    <citation type="journal article" date="2005" name="Nucleic Acids Res.">
        <title>The genome sequence of Xanthomonas oryzae pathovar oryzae KACC10331, the bacterial blight pathogen of rice.</title>
        <authorList>
            <person name="Lee B.-M."/>
            <person name="Park Y.-J."/>
            <person name="Park D.-S."/>
            <person name="Kang H.-W."/>
            <person name="Kim J.-G."/>
            <person name="Song E.-S."/>
            <person name="Park I.-C."/>
            <person name="Yoon U.-H."/>
            <person name="Hahn J.-H."/>
            <person name="Koo B.-S."/>
            <person name="Lee G.-B."/>
            <person name="Kim H."/>
            <person name="Park H.-S."/>
            <person name="Yoon K.-O."/>
            <person name="Kim J.-H."/>
            <person name="Jung C.-H."/>
            <person name="Koh N.-H."/>
            <person name="Seo J.-S."/>
            <person name="Go S.-J."/>
        </authorList>
    </citation>
    <scope>NUCLEOTIDE SEQUENCE [LARGE SCALE GENOMIC DNA]</scope>
    <source>
        <strain>KACC10331 / KXO85</strain>
    </source>
</reference>
<evidence type="ECO:0000255" key="1">
    <source>
        <dbReference type="HAMAP-Rule" id="MF_01428"/>
    </source>
</evidence>
<evidence type="ECO:0000256" key="2">
    <source>
        <dbReference type="SAM" id="MobiDB-lite"/>
    </source>
</evidence>
<evidence type="ECO:0000305" key="3"/>
<keyword id="KW-0030">Aminoacyl-tRNA synthetase</keyword>
<keyword id="KW-0067">ATP-binding</keyword>
<keyword id="KW-0436">Ligase</keyword>
<keyword id="KW-0479">Metal-binding</keyword>
<keyword id="KW-0547">Nucleotide-binding</keyword>
<keyword id="KW-1185">Reference proteome</keyword>
<keyword id="KW-0862">Zinc</keyword>
<protein>
    <recommendedName>
        <fullName evidence="1">Glutamyl-Q tRNA(Asp) synthetase</fullName>
        <shortName evidence="1">Glu-Q-RSs</shortName>
        <ecNumber evidence="1">6.1.1.-</ecNumber>
    </recommendedName>
</protein>
<organism>
    <name type="scientific">Xanthomonas oryzae pv. oryzae (strain KACC10331 / KXO85)</name>
    <dbReference type="NCBI Taxonomy" id="291331"/>
    <lineage>
        <taxon>Bacteria</taxon>
        <taxon>Pseudomonadati</taxon>
        <taxon>Pseudomonadota</taxon>
        <taxon>Gammaproteobacteria</taxon>
        <taxon>Lysobacterales</taxon>
        <taxon>Lysobacteraceae</taxon>
        <taxon>Xanthomonas</taxon>
    </lineage>
</organism>
<proteinExistence type="inferred from homology"/>
<dbReference type="EC" id="6.1.1.-" evidence="1"/>
<dbReference type="EMBL" id="AE013598">
    <property type="protein sequence ID" value="AAW75981.1"/>
    <property type="molecule type" value="Genomic_DNA"/>
</dbReference>
<dbReference type="SMR" id="Q5GZ90"/>
<dbReference type="STRING" id="291331.XOO2727"/>
<dbReference type="KEGG" id="xoo:XOO2727"/>
<dbReference type="PATRIC" id="fig|291331.8.peg.3015"/>
<dbReference type="HOGENOM" id="CLU_015768_0_1_6"/>
<dbReference type="Proteomes" id="UP000006735">
    <property type="component" value="Chromosome"/>
</dbReference>
<dbReference type="GO" id="GO:0005829">
    <property type="term" value="C:cytosol"/>
    <property type="evidence" value="ECO:0007669"/>
    <property type="project" value="TreeGrafter"/>
</dbReference>
<dbReference type="GO" id="GO:0005524">
    <property type="term" value="F:ATP binding"/>
    <property type="evidence" value="ECO:0007669"/>
    <property type="project" value="UniProtKB-KW"/>
</dbReference>
<dbReference type="GO" id="GO:0004818">
    <property type="term" value="F:glutamate-tRNA ligase activity"/>
    <property type="evidence" value="ECO:0007669"/>
    <property type="project" value="TreeGrafter"/>
</dbReference>
<dbReference type="GO" id="GO:0008270">
    <property type="term" value="F:zinc ion binding"/>
    <property type="evidence" value="ECO:0007669"/>
    <property type="project" value="InterPro"/>
</dbReference>
<dbReference type="GO" id="GO:0006424">
    <property type="term" value="P:glutamyl-tRNA aminoacylation"/>
    <property type="evidence" value="ECO:0007669"/>
    <property type="project" value="InterPro"/>
</dbReference>
<dbReference type="GO" id="GO:0006400">
    <property type="term" value="P:tRNA modification"/>
    <property type="evidence" value="ECO:0007669"/>
    <property type="project" value="InterPro"/>
</dbReference>
<dbReference type="Gene3D" id="3.40.50.620">
    <property type="entry name" value="HUPs"/>
    <property type="match status" value="1"/>
</dbReference>
<dbReference type="HAMAP" id="MF_01428">
    <property type="entry name" value="Glu_Q_tRNA_synth"/>
    <property type="match status" value="1"/>
</dbReference>
<dbReference type="InterPro" id="IPR022380">
    <property type="entry name" value="Glu-Q_tRNA(Asp)_Synthase"/>
</dbReference>
<dbReference type="InterPro" id="IPR000924">
    <property type="entry name" value="Glu/Gln-tRNA-synth"/>
</dbReference>
<dbReference type="InterPro" id="IPR020058">
    <property type="entry name" value="Glu/Gln-tRNA-synth_Ib_cat-dom"/>
</dbReference>
<dbReference type="InterPro" id="IPR049940">
    <property type="entry name" value="GluQ/Sye"/>
</dbReference>
<dbReference type="InterPro" id="IPR014729">
    <property type="entry name" value="Rossmann-like_a/b/a_fold"/>
</dbReference>
<dbReference type="NCBIfam" id="NF004314">
    <property type="entry name" value="PRK05710.1-3"/>
    <property type="match status" value="1"/>
</dbReference>
<dbReference type="NCBIfam" id="TIGR03838">
    <property type="entry name" value="queuosine_YadB"/>
    <property type="match status" value="1"/>
</dbReference>
<dbReference type="PANTHER" id="PTHR43311">
    <property type="entry name" value="GLUTAMATE--TRNA LIGASE"/>
    <property type="match status" value="1"/>
</dbReference>
<dbReference type="PANTHER" id="PTHR43311:SF1">
    <property type="entry name" value="GLUTAMYL-Q TRNA(ASP) SYNTHETASE"/>
    <property type="match status" value="1"/>
</dbReference>
<dbReference type="Pfam" id="PF00749">
    <property type="entry name" value="tRNA-synt_1c"/>
    <property type="match status" value="2"/>
</dbReference>
<dbReference type="PRINTS" id="PR00987">
    <property type="entry name" value="TRNASYNTHGLU"/>
</dbReference>
<dbReference type="SUPFAM" id="SSF52374">
    <property type="entry name" value="Nucleotidylyl transferase"/>
    <property type="match status" value="1"/>
</dbReference>
<comment type="function">
    <text evidence="1">Catalyzes the tRNA-independent activation of glutamate in presence of ATP and the subsequent transfer of glutamate onto a tRNA(Asp). Glutamate is transferred on the 2-amino-5-(4,5-dihydroxy-2-cyclopenten-1-yl) moiety of the queuosine in the wobble position of the QUC anticodon.</text>
</comment>
<comment type="cofactor">
    <cofactor evidence="1">
        <name>Zn(2+)</name>
        <dbReference type="ChEBI" id="CHEBI:29105"/>
    </cofactor>
    <text evidence="1">Binds 1 zinc ion per subunit.</text>
</comment>
<comment type="similarity">
    <text evidence="1">Belongs to the class-I aminoacyl-tRNA synthetase family. GluQ subfamily.</text>
</comment>
<comment type="caution">
    <text evidence="3">Lacks the conserved Tyr, which is one of four residues to bind the zinc atom.</text>
</comment>
<name>GLUQ_XANOR</name>
<accession>Q5GZ90</accession>
<sequence>MPSPSYLGRFAPSPTGPLHFGSLLAAFGSWLLARHAGGQWCVRIEDIDPPRAEPGASERQLRTLTAFGLHSDLPVIRQSERDAAYTAAINRLLETGQAFECSCSRADLAGMGGIHHACVAPLGARRAVRLRVPPQSPVGFDDALHGRVLQDVYADVGDVVLRRADGYWAYQLAVVVDDAAQGITDVVRGADLLDSTPRQMLLQRALGVPQPRYLHLPLMLDGDGRKLSKSHGAPALDDTDPLPALHAAWAGLGQRPDALPRRATVTTLLQQAVRHFSPQLLPRQRQRDRATCAYERQRD</sequence>
<feature type="chain" id="PRO_0000208338" description="Glutamyl-Q tRNA(Asp) synthetase">
    <location>
        <begin position="1"/>
        <end position="299"/>
    </location>
</feature>
<feature type="region of interest" description="Disordered" evidence="2">
    <location>
        <begin position="279"/>
        <end position="299"/>
    </location>
</feature>
<feature type="short sequence motif" description="'HIGH' region">
    <location>
        <begin position="12"/>
        <end position="22"/>
    </location>
</feature>
<feature type="short sequence motif" description="'KMSKS' region">
    <location>
        <begin position="226"/>
        <end position="230"/>
    </location>
</feature>
<feature type="compositionally biased region" description="Basic and acidic residues" evidence="2">
    <location>
        <begin position="285"/>
        <end position="299"/>
    </location>
</feature>
<feature type="binding site" evidence="1">
    <location>
        <begin position="9"/>
        <end position="13"/>
    </location>
    <ligand>
        <name>L-glutamate</name>
        <dbReference type="ChEBI" id="CHEBI:29985"/>
    </ligand>
</feature>
<feature type="binding site" evidence="1">
    <location>
        <position position="45"/>
    </location>
    <ligand>
        <name>L-glutamate</name>
        <dbReference type="ChEBI" id="CHEBI:29985"/>
    </ligand>
</feature>
<feature type="binding site" evidence="1">
    <location>
        <position position="101"/>
    </location>
    <ligand>
        <name>Zn(2+)</name>
        <dbReference type="ChEBI" id="CHEBI:29105"/>
    </ligand>
</feature>
<feature type="binding site" evidence="1">
    <location>
        <position position="103"/>
    </location>
    <ligand>
        <name>Zn(2+)</name>
        <dbReference type="ChEBI" id="CHEBI:29105"/>
    </ligand>
</feature>
<feature type="binding site" evidence="1">
    <location>
        <position position="118"/>
    </location>
    <ligand>
        <name>Zn(2+)</name>
        <dbReference type="ChEBI" id="CHEBI:29105"/>
    </ligand>
</feature>
<feature type="binding site" evidence="1">
    <location>
        <position position="170"/>
    </location>
    <ligand>
        <name>L-glutamate</name>
        <dbReference type="ChEBI" id="CHEBI:29985"/>
    </ligand>
</feature>
<feature type="binding site" evidence="1">
    <location>
        <position position="188"/>
    </location>
    <ligand>
        <name>L-glutamate</name>
        <dbReference type="ChEBI" id="CHEBI:29985"/>
    </ligand>
</feature>
<feature type="binding site" evidence="1">
    <location>
        <position position="229"/>
    </location>
    <ligand>
        <name>ATP</name>
        <dbReference type="ChEBI" id="CHEBI:30616"/>
    </ligand>
</feature>
<gene>
    <name evidence="1" type="primary">gluQ</name>
    <name type="ordered locus">XOO2727</name>
</gene>